<accession>Q0I236</accession>
<proteinExistence type="inferred from homology"/>
<dbReference type="EC" id="3.4.11.1" evidence="1"/>
<dbReference type="EC" id="3.4.11.10" evidence="1"/>
<dbReference type="EMBL" id="CP000436">
    <property type="protein sequence ID" value="ABI24793.1"/>
    <property type="molecule type" value="Genomic_DNA"/>
</dbReference>
<dbReference type="SMR" id="Q0I236"/>
<dbReference type="MEROPS" id="M17.003"/>
<dbReference type="KEGG" id="hso:HS_0516"/>
<dbReference type="eggNOG" id="COG0260">
    <property type="taxonomic scope" value="Bacteria"/>
</dbReference>
<dbReference type="HOGENOM" id="CLU_013734_2_2_6"/>
<dbReference type="GO" id="GO:0005737">
    <property type="term" value="C:cytoplasm"/>
    <property type="evidence" value="ECO:0007669"/>
    <property type="project" value="UniProtKB-SubCell"/>
</dbReference>
<dbReference type="GO" id="GO:0030145">
    <property type="term" value="F:manganese ion binding"/>
    <property type="evidence" value="ECO:0007669"/>
    <property type="project" value="UniProtKB-UniRule"/>
</dbReference>
<dbReference type="GO" id="GO:0070006">
    <property type="term" value="F:metalloaminopeptidase activity"/>
    <property type="evidence" value="ECO:0007669"/>
    <property type="project" value="InterPro"/>
</dbReference>
<dbReference type="GO" id="GO:0006508">
    <property type="term" value="P:proteolysis"/>
    <property type="evidence" value="ECO:0007669"/>
    <property type="project" value="UniProtKB-KW"/>
</dbReference>
<dbReference type="CDD" id="cd00433">
    <property type="entry name" value="Peptidase_M17"/>
    <property type="match status" value="1"/>
</dbReference>
<dbReference type="FunFam" id="3.40.630.10:FF:000004">
    <property type="entry name" value="Probable cytosol aminopeptidase"/>
    <property type="match status" value="1"/>
</dbReference>
<dbReference type="Gene3D" id="3.40.220.10">
    <property type="entry name" value="Leucine Aminopeptidase, subunit E, domain 1"/>
    <property type="match status" value="1"/>
</dbReference>
<dbReference type="Gene3D" id="3.40.630.10">
    <property type="entry name" value="Zn peptidases"/>
    <property type="match status" value="1"/>
</dbReference>
<dbReference type="HAMAP" id="MF_00181">
    <property type="entry name" value="Cytosol_peptidase_M17"/>
    <property type="match status" value="1"/>
</dbReference>
<dbReference type="InterPro" id="IPR011356">
    <property type="entry name" value="Leucine_aapep/pepB"/>
</dbReference>
<dbReference type="InterPro" id="IPR043472">
    <property type="entry name" value="Macro_dom-like"/>
</dbReference>
<dbReference type="InterPro" id="IPR000819">
    <property type="entry name" value="Peptidase_M17_C"/>
</dbReference>
<dbReference type="InterPro" id="IPR023042">
    <property type="entry name" value="Peptidase_M17_leu_NH2_pept"/>
</dbReference>
<dbReference type="InterPro" id="IPR008283">
    <property type="entry name" value="Peptidase_M17_N"/>
</dbReference>
<dbReference type="NCBIfam" id="NF002073">
    <property type="entry name" value="PRK00913.1-2"/>
    <property type="match status" value="1"/>
</dbReference>
<dbReference type="NCBIfam" id="NF002074">
    <property type="entry name" value="PRK00913.1-4"/>
    <property type="match status" value="1"/>
</dbReference>
<dbReference type="NCBIfam" id="NF002077">
    <property type="entry name" value="PRK00913.2-4"/>
    <property type="match status" value="1"/>
</dbReference>
<dbReference type="PANTHER" id="PTHR11963:SF23">
    <property type="entry name" value="CYTOSOL AMINOPEPTIDASE"/>
    <property type="match status" value="1"/>
</dbReference>
<dbReference type="PANTHER" id="PTHR11963">
    <property type="entry name" value="LEUCINE AMINOPEPTIDASE-RELATED"/>
    <property type="match status" value="1"/>
</dbReference>
<dbReference type="Pfam" id="PF00883">
    <property type="entry name" value="Peptidase_M17"/>
    <property type="match status" value="1"/>
</dbReference>
<dbReference type="Pfam" id="PF02789">
    <property type="entry name" value="Peptidase_M17_N"/>
    <property type="match status" value="1"/>
</dbReference>
<dbReference type="PRINTS" id="PR00481">
    <property type="entry name" value="LAMNOPPTDASE"/>
</dbReference>
<dbReference type="SUPFAM" id="SSF52949">
    <property type="entry name" value="Macro domain-like"/>
    <property type="match status" value="1"/>
</dbReference>
<dbReference type="SUPFAM" id="SSF53187">
    <property type="entry name" value="Zn-dependent exopeptidases"/>
    <property type="match status" value="1"/>
</dbReference>
<dbReference type="PROSITE" id="PS00631">
    <property type="entry name" value="CYTOSOL_AP"/>
    <property type="match status" value="1"/>
</dbReference>
<gene>
    <name evidence="1" type="primary">pepA</name>
    <name type="ordered locus">HS_0516</name>
</gene>
<evidence type="ECO:0000255" key="1">
    <source>
        <dbReference type="HAMAP-Rule" id="MF_00181"/>
    </source>
</evidence>
<feature type="chain" id="PRO_1000019923" description="Probable cytosol aminopeptidase">
    <location>
        <begin position="1"/>
        <end position="495"/>
    </location>
</feature>
<feature type="active site" evidence="1">
    <location>
        <position position="279"/>
    </location>
</feature>
<feature type="active site" evidence="1">
    <location>
        <position position="353"/>
    </location>
</feature>
<feature type="binding site" evidence="1">
    <location>
        <position position="267"/>
    </location>
    <ligand>
        <name>Mn(2+)</name>
        <dbReference type="ChEBI" id="CHEBI:29035"/>
        <label>2</label>
    </ligand>
</feature>
<feature type="binding site" evidence="1">
    <location>
        <position position="272"/>
    </location>
    <ligand>
        <name>Mn(2+)</name>
        <dbReference type="ChEBI" id="CHEBI:29035"/>
        <label>1</label>
    </ligand>
</feature>
<feature type="binding site" evidence="1">
    <location>
        <position position="272"/>
    </location>
    <ligand>
        <name>Mn(2+)</name>
        <dbReference type="ChEBI" id="CHEBI:29035"/>
        <label>2</label>
    </ligand>
</feature>
<feature type="binding site" evidence="1">
    <location>
        <position position="290"/>
    </location>
    <ligand>
        <name>Mn(2+)</name>
        <dbReference type="ChEBI" id="CHEBI:29035"/>
        <label>2</label>
    </ligand>
</feature>
<feature type="binding site" evidence="1">
    <location>
        <position position="349"/>
    </location>
    <ligand>
        <name>Mn(2+)</name>
        <dbReference type="ChEBI" id="CHEBI:29035"/>
        <label>1</label>
    </ligand>
</feature>
<feature type="binding site" evidence="1">
    <location>
        <position position="351"/>
    </location>
    <ligand>
        <name>Mn(2+)</name>
        <dbReference type="ChEBI" id="CHEBI:29035"/>
        <label>1</label>
    </ligand>
</feature>
<feature type="binding site" evidence="1">
    <location>
        <position position="351"/>
    </location>
    <ligand>
        <name>Mn(2+)</name>
        <dbReference type="ChEBI" id="CHEBI:29035"/>
        <label>2</label>
    </ligand>
</feature>
<keyword id="KW-0031">Aminopeptidase</keyword>
<keyword id="KW-0963">Cytoplasm</keyword>
<keyword id="KW-0378">Hydrolase</keyword>
<keyword id="KW-0464">Manganese</keyword>
<keyword id="KW-0479">Metal-binding</keyword>
<keyword id="KW-0645">Protease</keyword>
<organism>
    <name type="scientific">Histophilus somni (strain 129Pt)</name>
    <name type="common">Haemophilus somnus</name>
    <dbReference type="NCBI Taxonomy" id="205914"/>
    <lineage>
        <taxon>Bacteria</taxon>
        <taxon>Pseudomonadati</taxon>
        <taxon>Pseudomonadota</taxon>
        <taxon>Gammaproteobacteria</taxon>
        <taxon>Pasteurellales</taxon>
        <taxon>Pasteurellaceae</taxon>
        <taxon>Histophilus</taxon>
    </lineage>
</organism>
<comment type="function">
    <text evidence="1">Presumably involved in the processing and regular turnover of intracellular proteins. Catalyzes the removal of unsubstituted N-terminal amino acids from various peptides.</text>
</comment>
<comment type="catalytic activity">
    <reaction evidence="1">
        <text>Release of an N-terminal amino acid, Xaa-|-Yaa-, in which Xaa is preferably Leu, but may be other amino acids including Pro although not Arg or Lys, and Yaa may be Pro. Amino acid amides and methyl esters are also readily hydrolyzed, but rates on arylamides are exceedingly low.</text>
        <dbReference type="EC" id="3.4.11.1"/>
    </reaction>
</comment>
<comment type="catalytic activity">
    <reaction evidence="1">
        <text>Release of an N-terminal amino acid, preferentially leucine, but not glutamic or aspartic acids.</text>
        <dbReference type="EC" id="3.4.11.10"/>
    </reaction>
</comment>
<comment type="cofactor">
    <cofactor evidence="1">
        <name>Mn(2+)</name>
        <dbReference type="ChEBI" id="CHEBI:29035"/>
    </cofactor>
    <text evidence="1">Binds 2 manganese ions per subunit.</text>
</comment>
<comment type="subcellular location">
    <subcellularLocation>
        <location evidence="1">Cytoplasm</location>
    </subcellularLocation>
</comment>
<comment type="similarity">
    <text evidence="1">Belongs to the peptidase M17 family.</text>
</comment>
<sequence>MKYSAKNTALSQIDSNIILAVFEDGELSPTAMQFDQLSQGYLTRLIQVGEVSGKQGQVLILRDIPNCQAQRIFIVGCGKKDKITERQYKQIIQKTIQTILETQASEVVSFLNEIELKNRDIHWNIRFAIETIEASFYQFDAFKTKKGDENSVLNEFIFDVQPELQQDALLAITYAQAIALGVKHAKDIANCPPNICNPTYLAEQAQSLAKHSNLINVQVLGEKEMAELNMFSYLAVSQGSANEAKMSVIEYRNHPDKNAKPIVLVGKGLTFDAGGISLKPADSMDEMKYDMCGAASVFGVMYALATLQLPLNVIGVLAGCENLPDGNSYRPGDILTTMSGLTVEVLNTDAEGRLVLCDALTYVERFNPELVIDVATLTGACVVALGQHNSGLIATDEKLAEKLLNAAEETTDKAWRLPLSEEYQEQLKSNFADLANIGGRWGGAITAGAFLANFTKNYPWAHLDIAGTAWLQGTNKGATGRPVSLLTQFLINQSK</sequence>
<name>AMPA_HISS1</name>
<protein>
    <recommendedName>
        <fullName evidence="1">Probable cytosol aminopeptidase</fullName>
        <ecNumber evidence="1">3.4.11.1</ecNumber>
    </recommendedName>
    <alternativeName>
        <fullName evidence="1">Leucine aminopeptidase</fullName>
        <shortName evidence="1">LAP</shortName>
        <ecNumber evidence="1">3.4.11.10</ecNumber>
    </alternativeName>
    <alternativeName>
        <fullName evidence="1">Leucyl aminopeptidase</fullName>
    </alternativeName>
</protein>
<reference key="1">
    <citation type="journal article" date="2007" name="J. Bacteriol.">
        <title>Complete genome sequence of Haemophilus somnus (Histophilus somni) strain 129Pt and comparison to Haemophilus ducreyi 35000HP and Haemophilus influenzae Rd.</title>
        <authorList>
            <person name="Challacombe J.F."/>
            <person name="Duncan A.J."/>
            <person name="Brettin T.S."/>
            <person name="Bruce D."/>
            <person name="Chertkov O."/>
            <person name="Detter J.C."/>
            <person name="Han C.S."/>
            <person name="Misra M."/>
            <person name="Richardson P."/>
            <person name="Tapia R."/>
            <person name="Thayer N."/>
            <person name="Xie G."/>
            <person name="Inzana T.J."/>
        </authorList>
    </citation>
    <scope>NUCLEOTIDE SEQUENCE [LARGE SCALE GENOMIC DNA]</scope>
    <source>
        <strain>129Pt</strain>
    </source>
</reference>